<comment type="catalytic activity">
    <reaction>
        <text>(2R)-O-phospho-3-sulfolactate + H2O = (2R)-3-sulfolactate + phosphate</text>
        <dbReference type="Rhea" id="RHEA:23416"/>
        <dbReference type="ChEBI" id="CHEBI:15377"/>
        <dbReference type="ChEBI" id="CHEBI:15597"/>
        <dbReference type="ChEBI" id="CHEBI:43474"/>
        <dbReference type="ChEBI" id="CHEBI:58738"/>
        <dbReference type="EC" id="3.1.3.71"/>
    </reaction>
</comment>
<comment type="cofactor">
    <cofactor evidence="1">
        <name>Mg(2+)</name>
        <dbReference type="ChEBI" id="CHEBI:18420"/>
    </cofactor>
</comment>
<comment type="similarity">
    <text evidence="2">Belongs to the ComB family.</text>
</comment>
<evidence type="ECO:0000250" key="1"/>
<evidence type="ECO:0000305" key="2"/>
<name>COMB_DEIRA</name>
<accession>Q9RUI6</accession>
<protein>
    <recommendedName>
        <fullName>Probable 2-phosphosulfolactate phosphatase</fullName>
        <ecNumber>3.1.3.71</ecNumber>
    </recommendedName>
</protein>
<proteinExistence type="inferred from homology"/>
<dbReference type="EC" id="3.1.3.71"/>
<dbReference type="EMBL" id="AE000513">
    <property type="protein sequence ID" value="AAF10969.1"/>
    <property type="molecule type" value="Genomic_DNA"/>
</dbReference>
<dbReference type="PIR" id="H75400">
    <property type="entry name" value="H75400"/>
</dbReference>
<dbReference type="RefSeq" id="NP_295123.1">
    <property type="nucleotide sequence ID" value="NC_001263.1"/>
</dbReference>
<dbReference type="RefSeq" id="WP_010888039.1">
    <property type="nucleotide sequence ID" value="NC_001263.1"/>
</dbReference>
<dbReference type="SMR" id="Q9RUI6"/>
<dbReference type="FunCoup" id="Q9RUI6">
    <property type="interactions" value="89"/>
</dbReference>
<dbReference type="STRING" id="243230.DR_1400"/>
<dbReference type="PaxDb" id="243230-DR_1400"/>
<dbReference type="EnsemblBacteria" id="AAF10969">
    <property type="protein sequence ID" value="AAF10969"/>
    <property type="gene ID" value="DR_1400"/>
</dbReference>
<dbReference type="GeneID" id="69517643"/>
<dbReference type="KEGG" id="dra:DR_1400"/>
<dbReference type="PATRIC" id="fig|243230.17.peg.1597"/>
<dbReference type="eggNOG" id="COG2045">
    <property type="taxonomic scope" value="Bacteria"/>
</dbReference>
<dbReference type="HOGENOM" id="CLU_070028_0_0_0"/>
<dbReference type="InParanoid" id="Q9RUI6"/>
<dbReference type="OrthoDB" id="4913at2"/>
<dbReference type="Proteomes" id="UP000002524">
    <property type="component" value="Chromosome 1"/>
</dbReference>
<dbReference type="GO" id="GO:0050532">
    <property type="term" value="F:2-phosphosulfolactate phosphatase activity"/>
    <property type="evidence" value="ECO:0007669"/>
    <property type="project" value="UniProtKB-UniRule"/>
</dbReference>
<dbReference type="GO" id="GO:0000287">
    <property type="term" value="F:magnesium ion binding"/>
    <property type="evidence" value="ECO:0007669"/>
    <property type="project" value="UniProtKB-UniRule"/>
</dbReference>
<dbReference type="GO" id="GO:0050545">
    <property type="term" value="F:sulfopyruvate decarboxylase activity"/>
    <property type="evidence" value="ECO:0000318"/>
    <property type="project" value="GO_Central"/>
</dbReference>
<dbReference type="FunFam" id="3.90.1560.10:FF:000001">
    <property type="entry name" value="Probable 2-phosphosulfolactate phosphatase"/>
    <property type="match status" value="1"/>
</dbReference>
<dbReference type="Gene3D" id="3.90.1560.10">
    <property type="entry name" value="ComB-like"/>
    <property type="match status" value="1"/>
</dbReference>
<dbReference type="HAMAP" id="MF_00490">
    <property type="entry name" value="ComB"/>
    <property type="match status" value="1"/>
</dbReference>
<dbReference type="InterPro" id="IPR005238">
    <property type="entry name" value="ComB-like"/>
</dbReference>
<dbReference type="InterPro" id="IPR036702">
    <property type="entry name" value="ComB-like_sf"/>
</dbReference>
<dbReference type="NCBIfam" id="NF010700">
    <property type="entry name" value="PRK14100.1"/>
    <property type="match status" value="1"/>
</dbReference>
<dbReference type="PANTHER" id="PTHR37311">
    <property type="entry name" value="2-PHOSPHOSULFOLACTATE PHOSPHATASE-RELATED"/>
    <property type="match status" value="1"/>
</dbReference>
<dbReference type="PANTHER" id="PTHR37311:SF1">
    <property type="entry name" value="2-PHOSPHOSULFOLACTATE PHOSPHATASE-RELATED"/>
    <property type="match status" value="1"/>
</dbReference>
<dbReference type="Pfam" id="PF04029">
    <property type="entry name" value="2-ph_phosp"/>
    <property type="match status" value="1"/>
</dbReference>
<dbReference type="SUPFAM" id="SSF142823">
    <property type="entry name" value="ComB-like"/>
    <property type="match status" value="1"/>
</dbReference>
<sequence>MRLRVDLLPDSHYPDVALVIDVLRATTTAVTLLEQGAAELLLTRTTEAALAVRETVPDVLLAGERGGLTIPGFDLGNSPVEVSGGAVAGRRVVMTTTNGTIAAHRAAQTARHVVLAALVNAHAVARHALAVASEEIAIVCAGTDGRVGLDDVYAAGVIAEYLLALGDFQVDDGARIALTMRRGGGDPGEALRSSGHGATLARLGLSSDVDYAAQLSTSRLIPTLVPGDDVPAGALRFLAG</sequence>
<feature type="chain" id="PRO_0000081468" description="Probable 2-phosphosulfolactate phosphatase">
    <location>
        <begin position="1"/>
        <end position="240"/>
    </location>
</feature>
<organism>
    <name type="scientific">Deinococcus radiodurans (strain ATCC 13939 / DSM 20539 / JCM 16871 / CCUG 27074 / LMG 4051 / NBRC 15346 / NCIMB 9279 / VKM B-1422 / R1)</name>
    <dbReference type="NCBI Taxonomy" id="243230"/>
    <lineage>
        <taxon>Bacteria</taxon>
        <taxon>Thermotogati</taxon>
        <taxon>Deinococcota</taxon>
        <taxon>Deinococci</taxon>
        <taxon>Deinococcales</taxon>
        <taxon>Deinococcaceae</taxon>
        <taxon>Deinococcus</taxon>
    </lineage>
</organism>
<keyword id="KW-0378">Hydrolase</keyword>
<keyword id="KW-0460">Magnesium</keyword>
<keyword id="KW-1185">Reference proteome</keyword>
<gene>
    <name type="primary">comB</name>
    <name type="ordered locus">DR_1400</name>
</gene>
<reference key="1">
    <citation type="journal article" date="1999" name="Science">
        <title>Genome sequence of the radioresistant bacterium Deinococcus radiodurans R1.</title>
        <authorList>
            <person name="White O."/>
            <person name="Eisen J.A."/>
            <person name="Heidelberg J.F."/>
            <person name="Hickey E.K."/>
            <person name="Peterson J.D."/>
            <person name="Dodson R.J."/>
            <person name="Haft D.H."/>
            <person name="Gwinn M.L."/>
            <person name="Nelson W.C."/>
            <person name="Richardson D.L."/>
            <person name="Moffat K.S."/>
            <person name="Qin H."/>
            <person name="Jiang L."/>
            <person name="Pamphile W."/>
            <person name="Crosby M."/>
            <person name="Shen M."/>
            <person name="Vamathevan J.J."/>
            <person name="Lam P."/>
            <person name="McDonald L.A."/>
            <person name="Utterback T.R."/>
            <person name="Zalewski C."/>
            <person name="Makarova K.S."/>
            <person name="Aravind L."/>
            <person name="Daly M.J."/>
            <person name="Minton K.W."/>
            <person name="Fleischmann R.D."/>
            <person name="Ketchum K.A."/>
            <person name="Nelson K.E."/>
            <person name="Salzberg S.L."/>
            <person name="Smith H.O."/>
            <person name="Venter J.C."/>
            <person name="Fraser C.M."/>
        </authorList>
    </citation>
    <scope>NUCLEOTIDE SEQUENCE [LARGE SCALE GENOMIC DNA]</scope>
    <source>
        <strain>ATCC 13939 / DSM 20539 / JCM 16871 / CCUG 27074 / LMG 4051 / NBRC 15346 / NCIMB 9279 / VKM B-1422 / R1</strain>
    </source>
</reference>